<reference key="1">
    <citation type="journal article" date="2006" name="Arch. Biochem. Biophys.">
        <title>Lanosterol biosynthesis in plants.</title>
        <authorList>
            <person name="Kolesnikova M.D."/>
            <person name="Xiong Q."/>
            <person name="Lodeiro S."/>
            <person name="Hua L."/>
            <person name="Matsuda S.P.T."/>
        </authorList>
    </citation>
    <scope>NUCLEOTIDE SEQUENCE [MRNA]</scope>
    <scope>FUNCTION</scope>
    <scope>CATALYTIC ACTIVITY</scope>
</reference>
<reference key="2">
    <citation type="journal article" date="2006" name="Plant Cell Physiol.">
        <title>Lanosterol synthase in dicotyledonous plants.</title>
        <authorList>
            <person name="Suzuki M."/>
            <person name="Xiang T."/>
            <person name="Ohyama K."/>
            <person name="Seki H."/>
            <person name="Saito K."/>
            <person name="Muranaka T."/>
            <person name="Hayashi H."/>
            <person name="Katsube Y."/>
            <person name="Kushiro T."/>
            <person name="Shibuya M."/>
            <person name="Ebizuka Y."/>
        </authorList>
    </citation>
    <scope>NUCLEOTIDE SEQUENCE [MRNA]</scope>
    <scope>FUNCTION</scope>
    <scope>DISRUPTION PHENOTYPE</scope>
    <scope>TISSUE SPECIFICITY</scope>
</reference>
<reference key="3">
    <citation type="journal article" date="2000" name="Nature">
        <title>Sequence and analysis of chromosome 3 of the plant Arabidopsis thaliana.</title>
        <authorList>
            <person name="Salanoubat M."/>
            <person name="Lemcke K."/>
            <person name="Rieger M."/>
            <person name="Ansorge W."/>
            <person name="Unseld M."/>
            <person name="Fartmann B."/>
            <person name="Valle G."/>
            <person name="Bloecker H."/>
            <person name="Perez-Alonso M."/>
            <person name="Obermaier B."/>
            <person name="Delseny M."/>
            <person name="Boutry M."/>
            <person name="Grivell L.A."/>
            <person name="Mache R."/>
            <person name="Puigdomenech P."/>
            <person name="De Simone V."/>
            <person name="Choisne N."/>
            <person name="Artiguenave F."/>
            <person name="Robert C."/>
            <person name="Brottier P."/>
            <person name="Wincker P."/>
            <person name="Cattolico L."/>
            <person name="Weissenbach J."/>
            <person name="Saurin W."/>
            <person name="Quetier F."/>
            <person name="Schaefer M."/>
            <person name="Mueller-Auer S."/>
            <person name="Gabel C."/>
            <person name="Fuchs M."/>
            <person name="Benes V."/>
            <person name="Wurmbach E."/>
            <person name="Drzonek H."/>
            <person name="Erfle H."/>
            <person name="Jordan N."/>
            <person name="Bangert S."/>
            <person name="Wiedelmann R."/>
            <person name="Kranz H."/>
            <person name="Voss H."/>
            <person name="Holland R."/>
            <person name="Brandt P."/>
            <person name="Nyakatura G."/>
            <person name="Vezzi A."/>
            <person name="D'Angelo M."/>
            <person name="Pallavicini A."/>
            <person name="Toppo S."/>
            <person name="Simionati B."/>
            <person name="Conrad A."/>
            <person name="Hornischer K."/>
            <person name="Kauer G."/>
            <person name="Loehnert T.-H."/>
            <person name="Nordsiek G."/>
            <person name="Reichelt J."/>
            <person name="Scharfe M."/>
            <person name="Schoen O."/>
            <person name="Bargues M."/>
            <person name="Terol J."/>
            <person name="Climent J."/>
            <person name="Navarro P."/>
            <person name="Collado C."/>
            <person name="Perez-Perez A."/>
            <person name="Ottenwaelder B."/>
            <person name="Duchemin D."/>
            <person name="Cooke R."/>
            <person name="Laudie M."/>
            <person name="Berger-Llauro C."/>
            <person name="Purnelle B."/>
            <person name="Masuy D."/>
            <person name="de Haan M."/>
            <person name="Maarse A.C."/>
            <person name="Alcaraz J.-P."/>
            <person name="Cottet A."/>
            <person name="Casacuberta E."/>
            <person name="Monfort A."/>
            <person name="Argiriou A."/>
            <person name="Flores M."/>
            <person name="Liguori R."/>
            <person name="Vitale D."/>
            <person name="Mannhaupt G."/>
            <person name="Haase D."/>
            <person name="Schoof H."/>
            <person name="Rudd S."/>
            <person name="Zaccaria P."/>
            <person name="Mewes H.-W."/>
            <person name="Mayer K.F.X."/>
            <person name="Kaul S."/>
            <person name="Town C.D."/>
            <person name="Koo H.L."/>
            <person name="Tallon L.J."/>
            <person name="Jenkins J."/>
            <person name="Rooney T."/>
            <person name="Rizzo M."/>
            <person name="Walts A."/>
            <person name="Utterback T."/>
            <person name="Fujii C.Y."/>
            <person name="Shea T.P."/>
            <person name="Creasy T.H."/>
            <person name="Haas B."/>
            <person name="Maiti R."/>
            <person name="Wu D."/>
            <person name="Peterson J."/>
            <person name="Van Aken S."/>
            <person name="Pai G."/>
            <person name="Militscher J."/>
            <person name="Sellers P."/>
            <person name="Gill J.E."/>
            <person name="Feldblyum T.V."/>
            <person name="Preuss D."/>
            <person name="Lin X."/>
            <person name="Nierman W.C."/>
            <person name="Salzberg S.L."/>
            <person name="White O."/>
            <person name="Venter J.C."/>
            <person name="Fraser C.M."/>
            <person name="Kaneko T."/>
            <person name="Nakamura Y."/>
            <person name="Sato S."/>
            <person name="Kato T."/>
            <person name="Asamizu E."/>
            <person name="Sasamoto S."/>
            <person name="Kimura T."/>
            <person name="Idesawa K."/>
            <person name="Kawashima K."/>
            <person name="Kishida Y."/>
            <person name="Kiyokawa C."/>
            <person name="Kohara M."/>
            <person name="Matsumoto M."/>
            <person name="Matsuno A."/>
            <person name="Muraki A."/>
            <person name="Nakayama S."/>
            <person name="Nakazaki N."/>
            <person name="Shinpo S."/>
            <person name="Takeuchi C."/>
            <person name="Wada T."/>
            <person name="Watanabe A."/>
            <person name="Yamada M."/>
            <person name="Yasuda M."/>
            <person name="Tabata S."/>
        </authorList>
    </citation>
    <scope>NUCLEOTIDE SEQUENCE [LARGE SCALE GENOMIC DNA]</scope>
    <source>
        <strain>cv. Columbia</strain>
    </source>
</reference>
<reference key="4">
    <citation type="journal article" date="2017" name="Plant J.">
        <title>Araport11: a complete reannotation of the Arabidopsis thaliana reference genome.</title>
        <authorList>
            <person name="Cheng C.Y."/>
            <person name="Krishnakumar V."/>
            <person name="Chan A.P."/>
            <person name="Thibaud-Nissen F."/>
            <person name="Schobel S."/>
            <person name="Town C.D."/>
        </authorList>
    </citation>
    <scope>GENOME REANNOTATION</scope>
    <source>
        <strain>cv. Columbia</strain>
    </source>
</reference>
<name>LAS1_ARATH</name>
<accession>Q1G1A4</accession>
<accession>A0A1I9LTE2</accession>
<accession>Q9M1U6</accession>
<evidence type="ECO:0000250" key="1">
    <source>
        <dbReference type="UniProtKB" id="P48449"/>
    </source>
</evidence>
<evidence type="ECO:0000269" key="2">
    <source>
    </source>
</evidence>
<evidence type="ECO:0000269" key="3">
    <source>
    </source>
</evidence>
<evidence type="ECO:0000303" key="4">
    <source>
    </source>
</evidence>
<evidence type="ECO:0000305" key="5"/>
<feature type="chain" id="PRO_0000366143" description="Lanosterol synthase">
    <location>
        <begin position="1"/>
        <end position="756"/>
    </location>
</feature>
<feature type="repeat" description="PFTB 1">
    <location>
        <begin position="147"/>
        <end position="188"/>
    </location>
</feature>
<feature type="repeat" description="PFTB 2">
    <location>
        <begin position="512"/>
        <end position="557"/>
    </location>
</feature>
<feature type="repeat" description="PFTB 3">
    <location>
        <begin position="589"/>
        <end position="629"/>
    </location>
</feature>
<feature type="repeat" description="PFTB 4">
    <location>
        <begin position="638"/>
        <end position="679"/>
    </location>
</feature>
<feature type="active site" description="Proton donor" evidence="1">
    <location>
        <position position="483"/>
    </location>
</feature>
<proteinExistence type="evidence at protein level"/>
<comment type="function">
    <text evidence="2 3">Converts oxidosqualene to lanosterol.</text>
</comment>
<comment type="catalytic activity">
    <reaction evidence="2">
        <text>(S)-2,3-epoxysqualene = lanosterol</text>
        <dbReference type="Rhea" id="RHEA:14621"/>
        <dbReference type="ChEBI" id="CHEBI:15441"/>
        <dbReference type="ChEBI" id="CHEBI:16521"/>
        <dbReference type="EC" id="5.4.99.7"/>
    </reaction>
    <physiologicalReaction direction="left-to-right" evidence="2">
        <dbReference type="Rhea" id="RHEA:14622"/>
    </physiologicalReaction>
</comment>
<comment type="tissue specificity">
    <text evidence="3">Expressed in roots, stems and siliques. Low expression in rosette leaves.</text>
</comment>
<comment type="disruption phenotype">
    <text evidence="3">No visible phenotype.</text>
</comment>
<comment type="similarity">
    <text evidence="5">Belongs to the terpene cyclase/mutase family.</text>
</comment>
<comment type="sequence caution" evidence="5">
    <conflict type="erroneous gene model prediction">
        <sequence resource="EMBL-CDS" id="CAB72151"/>
    </conflict>
</comment>
<protein>
    <recommendedName>
        <fullName evidence="4">Lanosterol synthase</fullName>
        <ecNumber evidence="2">5.4.99.7</ecNumber>
    </recommendedName>
</protein>
<organism>
    <name type="scientific">Arabidopsis thaliana</name>
    <name type="common">Mouse-ear cress</name>
    <dbReference type="NCBI Taxonomy" id="3702"/>
    <lineage>
        <taxon>Eukaryota</taxon>
        <taxon>Viridiplantae</taxon>
        <taxon>Streptophyta</taxon>
        <taxon>Embryophyta</taxon>
        <taxon>Tracheophyta</taxon>
        <taxon>Spermatophyta</taxon>
        <taxon>Magnoliopsida</taxon>
        <taxon>eudicotyledons</taxon>
        <taxon>Gunneridae</taxon>
        <taxon>Pentapetalae</taxon>
        <taxon>rosids</taxon>
        <taxon>malvids</taxon>
        <taxon>Brassicales</taxon>
        <taxon>Brassicaceae</taxon>
        <taxon>Camelineae</taxon>
        <taxon>Arabidopsis</taxon>
    </lineage>
</organism>
<dbReference type="EC" id="5.4.99.7" evidence="2"/>
<dbReference type="EMBL" id="DQ508794">
    <property type="protein sequence ID" value="ABF57670.1"/>
    <property type="molecule type" value="mRNA"/>
</dbReference>
<dbReference type="EMBL" id="AB247155">
    <property type="protein sequence ID" value="BAE95408.1"/>
    <property type="molecule type" value="mRNA"/>
</dbReference>
<dbReference type="EMBL" id="AL138649">
    <property type="protein sequence ID" value="CAB72151.1"/>
    <property type="status" value="ALT_SEQ"/>
    <property type="molecule type" value="Genomic_DNA"/>
</dbReference>
<dbReference type="EMBL" id="CP002686">
    <property type="protein sequence ID" value="AEE77996.1"/>
    <property type="molecule type" value="Genomic_DNA"/>
</dbReference>
<dbReference type="EMBL" id="CP002686">
    <property type="protein sequence ID" value="ANM65849.1"/>
    <property type="molecule type" value="Genomic_DNA"/>
</dbReference>
<dbReference type="EMBL" id="CP002686">
    <property type="protein sequence ID" value="ANM65850.1"/>
    <property type="molecule type" value="Genomic_DNA"/>
</dbReference>
<dbReference type="PIR" id="T47453">
    <property type="entry name" value="T47453"/>
</dbReference>
<dbReference type="RefSeq" id="NP_001327787.1">
    <property type="nucleotide sequence ID" value="NM_001339197.1"/>
</dbReference>
<dbReference type="RefSeq" id="NP_001327788.1">
    <property type="nucleotide sequence ID" value="NM_001339196.1"/>
</dbReference>
<dbReference type="RefSeq" id="NP_190099.3">
    <property type="nucleotide sequence ID" value="NM_114382.5"/>
</dbReference>
<dbReference type="SMR" id="Q1G1A4"/>
<dbReference type="FunCoup" id="Q1G1A4">
    <property type="interactions" value="760"/>
</dbReference>
<dbReference type="STRING" id="3702.Q1G1A4"/>
<dbReference type="iPTMnet" id="Q1G1A4"/>
<dbReference type="PaxDb" id="3702-AT3G45130.1"/>
<dbReference type="ProteomicsDB" id="237148"/>
<dbReference type="EnsemblPlants" id="AT3G45130.1">
    <property type="protein sequence ID" value="AT3G45130.1"/>
    <property type="gene ID" value="AT3G45130"/>
</dbReference>
<dbReference type="EnsemblPlants" id="AT3G45130.4">
    <property type="protein sequence ID" value="AT3G45130.4"/>
    <property type="gene ID" value="AT3G45130"/>
</dbReference>
<dbReference type="EnsemblPlants" id="AT3G45130.5">
    <property type="protein sequence ID" value="AT3G45130.5"/>
    <property type="gene ID" value="AT3G45130"/>
</dbReference>
<dbReference type="GeneID" id="823649"/>
<dbReference type="Gramene" id="AT3G45130.1">
    <property type="protein sequence ID" value="AT3G45130.1"/>
    <property type="gene ID" value="AT3G45130"/>
</dbReference>
<dbReference type="Gramene" id="AT3G45130.4">
    <property type="protein sequence ID" value="AT3G45130.4"/>
    <property type="gene ID" value="AT3G45130"/>
</dbReference>
<dbReference type="Gramene" id="AT3G45130.5">
    <property type="protein sequence ID" value="AT3G45130.5"/>
    <property type="gene ID" value="AT3G45130"/>
</dbReference>
<dbReference type="KEGG" id="ath:AT3G45130"/>
<dbReference type="Araport" id="AT3G45130"/>
<dbReference type="TAIR" id="AT3G45130">
    <property type="gene designation" value="LAS1"/>
</dbReference>
<dbReference type="eggNOG" id="KOG0497">
    <property type="taxonomic scope" value="Eukaryota"/>
</dbReference>
<dbReference type="HOGENOM" id="CLU_009074_2_1_1"/>
<dbReference type="InParanoid" id="Q1G1A4"/>
<dbReference type="OMA" id="QYVECKS"/>
<dbReference type="OrthoDB" id="21502at2759"/>
<dbReference type="PhylomeDB" id="Q1G1A4"/>
<dbReference type="BioCyc" id="ARA:AT3G45130-MONOMER"/>
<dbReference type="BRENDA" id="5.4.99.7">
    <property type="organism ID" value="399"/>
</dbReference>
<dbReference type="PRO" id="PR:Q1G1A4"/>
<dbReference type="Proteomes" id="UP000006548">
    <property type="component" value="Chromosome 3"/>
</dbReference>
<dbReference type="ExpressionAtlas" id="Q1G1A4">
    <property type="expression patterns" value="baseline and differential"/>
</dbReference>
<dbReference type="GO" id="GO:0005811">
    <property type="term" value="C:lipid droplet"/>
    <property type="evidence" value="ECO:0007669"/>
    <property type="project" value="InterPro"/>
</dbReference>
<dbReference type="GO" id="GO:0000250">
    <property type="term" value="F:lanosterol synthase activity"/>
    <property type="evidence" value="ECO:0000314"/>
    <property type="project" value="TAIR"/>
</dbReference>
<dbReference type="GO" id="GO:0016104">
    <property type="term" value="P:triterpenoid biosynthetic process"/>
    <property type="evidence" value="ECO:0007669"/>
    <property type="project" value="InterPro"/>
</dbReference>
<dbReference type="CDD" id="cd02892">
    <property type="entry name" value="SQCY_1"/>
    <property type="match status" value="1"/>
</dbReference>
<dbReference type="FunFam" id="1.50.10.20:FF:000055">
    <property type="entry name" value="Baccharis oxide synthase"/>
    <property type="match status" value="1"/>
</dbReference>
<dbReference type="FunFam" id="1.50.10.20:FF:000002">
    <property type="entry name" value="Terpene cyclase/mutase family member"/>
    <property type="match status" value="1"/>
</dbReference>
<dbReference type="Gene3D" id="1.50.10.20">
    <property type="match status" value="2"/>
</dbReference>
<dbReference type="InterPro" id="IPR032696">
    <property type="entry name" value="SQ_cyclase_C"/>
</dbReference>
<dbReference type="InterPro" id="IPR032697">
    <property type="entry name" value="SQ_cyclase_N"/>
</dbReference>
<dbReference type="InterPro" id="IPR018333">
    <property type="entry name" value="Squalene_cyclase"/>
</dbReference>
<dbReference type="InterPro" id="IPR002365">
    <property type="entry name" value="Terpene_synthase_CS"/>
</dbReference>
<dbReference type="InterPro" id="IPR008930">
    <property type="entry name" value="Terpenoid_cyclase/PrenylTrfase"/>
</dbReference>
<dbReference type="NCBIfam" id="TIGR01787">
    <property type="entry name" value="squalene_cyclas"/>
    <property type="match status" value="1"/>
</dbReference>
<dbReference type="PANTHER" id="PTHR11764:SF44">
    <property type="entry name" value="LANOSTEROL SYNTHASE"/>
    <property type="match status" value="1"/>
</dbReference>
<dbReference type="PANTHER" id="PTHR11764">
    <property type="entry name" value="TERPENE CYCLASE/MUTASE FAMILY MEMBER"/>
    <property type="match status" value="1"/>
</dbReference>
<dbReference type="Pfam" id="PF13243">
    <property type="entry name" value="SQHop_cyclase_C"/>
    <property type="match status" value="1"/>
</dbReference>
<dbReference type="Pfam" id="PF13249">
    <property type="entry name" value="SQHop_cyclase_N"/>
    <property type="match status" value="1"/>
</dbReference>
<dbReference type="SFLD" id="SFLDG01016">
    <property type="entry name" value="Prenyltransferase_Like_2"/>
    <property type="match status" value="1"/>
</dbReference>
<dbReference type="SUPFAM" id="SSF48239">
    <property type="entry name" value="Terpenoid cyclases/Protein prenyltransferases"/>
    <property type="match status" value="2"/>
</dbReference>
<dbReference type="PROSITE" id="PS01074">
    <property type="entry name" value="TERPENE_SYNTHASES"/>
    <property type="match status" value="1"/>
</dbReference>
<sequence>MWRLKLSEGDEESVNQHVGRQFWEYDNQFGTSEERHHINHLRSNFTLNRFSSKHSSDLLYRFQCWKEKGKGMERLPQVKVKEGEERLINEEVVNVTLRRSLRFYSILQSQDGFWPGDYGGPLFLLPALVIGLYVTEVLDGTLTAQHQIEIRRYLYNHQNKDGGWGLHVEGNSTMFCTVLSYVALRLMGEELDGGDGAMESARSWIHHHGGATFIPSWGKFWLSVLGAYEWSGNNPLPPELWLLPYSLPFHPGRMWCHCRMVYLPMSYLYGRRFVCRTNGTILSLRRELYTIPYHHIDWDTARNQCAKEDLYYPHPKIQDVLWSCLNKFGEPLLERWPLNNLRNHALQTVMQHIHYEDQNSHYICIGPVNKVLNMLCCWVESSNSEAFKSHLSRIKDYLWVAEDGMKMQGYNGSQLWDVTLAVQAILATNLVDDYGLMLKKAHNYIKNTQIRKDTSGDPGLWYRHPCKGGWGFSTGDNPWPVSDCTAEALKAALLLSQMPVNLVGEPMPEEHLVDAVNFILSLQNKNGGFASYELTRSYPELEVINPSETFGDIIIDYQYVECTSAAIQGLVLFTTLNSSYKRKEIVGSINKAVEFIEKTQLPDGSWYGSWGVCFTYATWFGIKGMLASGKTYESSLCIRKACGFLLSKQLCCGGWGESYLSCQNKVYTNLPGNKSHIVNTSWALLALIEAGQASRDPMPLHRGAKSLINSQMEDGDYPQQEILGVFNRNCMISYSAYRNIFPIWALGEYRKLMLSL</sequence>
<gene>
    <name type="primary">LAS1</name>
    <name type="synonym">LSS</name>
    <name type="ordered locus">At3g45130</name>
    <name type="ORF">T14D3.70</name>
</gene>
<keyword id="KW-0413">Isomerase</keyword>
<keyword id="KW-1185">Reference proteome</keyword>
<keyword id="KW-0677">Repeat</keyword>